<sequence>MAQMTMVQAINDALKSELKRDEDVLVFGEDVGVNGGVFRVTEGLQKEFGEDRVFDTPLAESGIGGLALGLAVTGFRPVMEIQFLGFVYEVFDEVAGQIARTRFRSGGTKPAPVTIRTPFGGGVHTPELHADNLEGILAQSPGLKVVIPSGPYDAKGLLISSIQSNDPVVYLEHMKLYRSFREEVPEEEYKIDIGKANVKKEGNDITLISYGAMVQESLKAAEELEKDGYSVEVIDLRTVQPIDIDTLVASVEKTGRAVVVQEAQRQAGVGAQVAAELAERAILSLEAPIARVAASDTIYPFTQAENVWLPNKKDIIEQAKATLEF</sequence>
<gene>
    <name type="primary">pdhB</name>
    <name type="ordered locus">SERP0681</name>
</gene>
<reference key="1">
    <citation type="journal article" date="2005" name="J. Bacteriol.">
        <title>Insights on evolution of virulence and resistance from the complete genome analysis of an early methicillin-resistant Staphylococcus aureus strain and a biofilm-producing methicillin-resistant Staphylococcus epidermidis strain.</title>
        <authorList>
            <person name="Gill S.R."/>
            <person name="Fouts D.E."/>
            <person name="Archer G.L."/>
            <person name="Mongodin E.F."/>
            <person name="DeBoy R.T."/>
            <person name="Ravel J."/>
            <person name="Paulsen I.T."/>
            <person name="Kolonay J.F."/>
            <person name="Brinkac L.M."/>
            <person name="Beanan M.J."/>
            <person name="Dodson R.J."/>
            <person name="Daugherty S.C."/>
            <person name="Madupu R."/>
            <person name="Angiuoli S.V."/>
            <person name="Durkin A.S."/>
            <person name="Haft D.H."/>
            <person name="Vamathevan J.J."/>
            <person name="Khouri H."/>
            <person name="Utterback T.R."/>
            <person name="Lee C."/>
            <person name="Dimitrov G."/>
            <person name="Jiang L."/>
            <person name="Qin H."/>
            <person name="Weidman J."/>
            <person name="Tran K."/>
            <person name="Kang K.H."/>
            <person name="Hance I.R."/>
            <person name="Nelson K.E."/>
            <person name="Fraser C.M."/>
        </authorList>
    </citation>
    <scope>NUCLEOTIDE SEQUENCE [LARGE SCALE GENOMIC DNA]</scope>
    <source>
        <strain>ATCC 35984 / DSM 28319 / BCRC 17069 / CCUG 31568 / BM 3577 / RP62A</strain>
    </source>
</reference>
<comment type="function">
    <text evidence="1">The pyruvate dehydrogenase complex catalyzes the overall conversion of pyruvate to acetyl-CoA and CO(2). It contains multiple copies of three enzymatic components: pyruvate dehydrogenase (E1), dihydrolipoamide acetyltransferase (E2) and lipoamide dehydrogenase (E3) (By similarity).</text>
</comment>
<comment type="catalytic activity">
    <reaction>
        <text>N(6)-[(R)-lipoyl]-L-lysyl-[protein] + pyruvate + H(+) = N(6)-[(R)-S(8)-acetyldihydrolipoyl]-L-lysyl-[protein] + CO2</text>
        <dbReference type="Rhea" id="RHEA:19189"/>
        <dbReference type="Rhea" id="RHEA-COMP:10474"/>
        <dbReference type="Rhea" id="RHEA-COMP:10478"/>
        <dbReference type="ChEBI" id="CHEBI:15361"/>
        <dbReference type="ChEBI" id="CHEBI:15378"/>
        <dbReference type="ChEBI" id="CHEBI:16526"/>
        <dbReference type="ChEBI" id="CHEBI:83099"/>
        <dbReference type="ChEBI" id="CHEBI:83111"/>
        <dbReference type="EC" id="1.2.4.1"/>
    </reaction>
</comment>
<comment type="cofactor">
    <cofactor evidence="1">
        <name>thiamine diphosphate</name>
        <dbReference type="ChEBI" id="CHEBI:58937"/>
    </cofactor>
</comment>
<comment type="subunit">
    <text>Heterodimer of an alpha and a beta chain.</text>
</comment>
<accession>Q5HQ75</accession>
<keyword id="KW-0560">Oxidoreductase</keyword>
<keyword id="KW-0670">Pyruvate</keyword>
<keyword id="KW-1185">Reference proteome</keyword>
<keyword id="KW-0786">Thiamine pyrophosphate</keyword>
<organism>
    <name type="scientific">Staphylococcus epidermidis (strain ATCC 35984 / DSM 28319 / BCRC 17069 / CCUG 31568 / BM 3577 / RP62A)</name>
    <dbReference type="NCBI Taxonomy" id="176279"/>
    <lineage>
        <taxon>Bacteria</taxon>
        <taxon>Bacillati</taxon>
        <taxon>Bacillota</taxon>
        <taxon>Bacilli</taxon>
        <taxon>Bacillales</taxon>
        <taxon>Staphylococcaceae</taxon>
        <taxon>Staphylococcus</taxon>
    </lineage>
</organism>
<proteinExistence type="inferred from homology"/>
<feature type="chain" id="PRO_0000162236" description="Pyruvate dehydrogenase E1 component subunit beta">
    <location>
        <begin position="1"/>
        <end position="325"/>
    </location>
</feature>
<feature type="binding site" evidence="1">
    <location>
        <position position="60"/>
    </location>
    <ligand>
        <name>thiamine diphosphate</name>
        <dbReference type="ChEBI" id="CHEBI:58937"/>
    </ligand>
</feature>
<protein>
    <recommendedName>
        <fullName>Pyruvate dehydrogenase E1 component subunit beta</fullName>
        <ecNumber>1.2.4.1</ecNumber>
    </recommendedName>
</protein>
<dbReference type="EC" id="1.2.4.1"/>
<dbReference type="EMBL" id="CP000029">
    <property type="protein sequence ID" value="AAW54053.1"/>
    <property type="molecule type" value="Genomic_DNA"/>
</dbReference>
<dbReference type="RefSeq" id="WP_001831654.1">
    <property type="nucleotide sequence ID" value="NC_002976.3"/>
</dbReference>
<dbReference type="SMR" id="Q5HQ75"/>
<dbReference type="STRING" id="176279.SERP0681"/>
<dbReference type="KEGG" id="ser:SERP0681"/>
<dbReference type="eggNOG" id="COG0022">
    <property type="taxonomic scope" value="Bacteria"/>
</dbReference>
<dbReference type="HOGENOM" id="CLU_012907_1_0_9"/>
<dbReference type="Proteomes" id="UP000000531">
    <property type="component" value="Chromosome"/>
</dbReference>
<dbReference type="GO" id="GO:0004739">
    <property type="term" value="F:pyruvate dehydrogenase (acetyl-transferring) activity"/>
    <property type="evidence" value="ECO:0007669"/>
    <property type="project" value="UniProtKB-EC"/>
</dbReference>
<dbReference type="CDD" id="cd07036">
    <property type="entry name" value="TPP_PYR_E1-PDHc-beta_like"/>
    <property type="match status" value="1"/>
</dbReference>
<dbReference type="FunFam" id="3.40.50.920:FF:000001">
    <property type="entry name" value="Pyruvate dehydrogenase E1 beta subunit"/>
    <property type="match status" value="1"/>
</dbReference>
<dbReference type="FunFam" id="3.40.50.970:FF:000001">
    <property type="entry name" value="Pyruvate dehydrogenase E1 beta subunit"/>
    <property type="match status" value="1"/>
</dbReference>
<dbReference type="Gene3D" id="3.40.50.920">
    <property type="match status" value="1"/>
</dbReference>
<dbReference type="Gene3D" id="3.40.50.970">
    <property type="match status" value="1"/>
</dbReference>
<dbReference type="InterPro" id="IPR029061">
    <property type="entry name" value="THDP-binding"/>
</dbReference>
<dbReference type="InterPro" id="IPR009014">
    <property type="entry name" value="Transketo_C/PFOR_II"/>
</dbReference>
<dbReference type="InterPro" id="IPR005475">
    <property type="entry name" value="Transketolase-like_Pyr-bd"/>
</dbReference>
<dbReference type="InterPro" id="IPR033248">
    <property type="entry name" value="Transketolase_C"/>
</dbReference>
<dbReference type="PANTHER" id="PTHR43257">
    <property type="entry name" value="PYRUVATE DEHYDROGENASE E1 COMPONENT BETA SUBUNIT"/>
    <property type="match status" value="1"/>
</dbReference>
<dbReference type="PANTHER" id="PTHR43257:SF2">
    <property type="entry name" value="PYRUVATE DEHYDROGENASE E1 COMPONENT SUBUNIT BETA"/>
    <property type="match status" value="1"/>
</dbReference>
<dbReference type="Pfam" id="PF02779">
    <property type="entry name" value="Transket_pyr"/>
    <property type="match status" value="1"/>
</dbReference>
<dbReference type="Pfam" id="PF02780">
    <property type="entry name" value="Transketolase_C"/>
    <property type="match status" value="1"/>
</dbReference>
<dbReference type="SMART" id="SM00861">
    <property type="entry name" value="Transket_pyr"/>
    <property type="match status" value="1"/>
</dbReference>
<dbReference type="SUPFAM" id="SSF52518">
    <property type="entry name" value="Thiamin diphosphate-binding fold (THDP-binding)"/>
    <property type="match status" value="1"/>
</dbReference>
<dbReference type="SUPFAM" id="SSF52922">
    <property type="entry name" value="TK C-terminal domain-like"/>
    <property type="match status" value="1"/>
</dbReference>
<name>ODPB_STAEQ</name>
<evidence type="ECO:0000250" key="1"/>